<comment type="function">
    <text evidence="1">Involved in the biosynthesis of isopentenyl diphosphate (IPP) and dimethylallyl diphosphate (DMAPP), two major building blocks of isoprenoid compounds. Catalyzes the conversion of 4-diphosphocytidyl-2-C-methyl-D-erythritol 2-phosphate (CDP-ME2P) to 2-C-methyl-D-erythritol 2,4-cyclodiphosphate (ME-CPP) with a corresponding release of cytidine 5-monophosphate (CMP).</text>
</comment>
<comment type="catalytic activity">
    <reaction evidence="1">
        <text>4-CDP-2-C-methyl-D-erythritol 2-phosphate = 2-C-methyl-D-erythritol 2,4-cyclic diphosphate + CMP</text>
        <dbReference type="Rhea" id="RHEA:23864"/>
        <dbReference type="ChEBI" id="CHEBI:57919"/>
        <dbReference type="ChEBI" id="CHEBI:58483"/>
        <dbReference type="ChEBI" id="CHEBI:60377"/>
        <dbReference type="EC" id="4.6.1.12"/>
    </reaction>
</comment>
<comment type="cofactor">
    <cofactor evidence="1">
        <name>a divalent metal cation</name>
        <dbReference type="ChEBI" id="CHEBI:60240"/>
    </cofactor>
    <text evidence="1">Binds 1 divalent metal cation per subunit.</text>
</comment>
<comment type="pathway">
    <text evidence="1">Isoprenoid biosynthesis; isopentenyl diphosphate biosynthesis via DXP pathway; isopentenyl diphosphate from 1-deoxy-D-xylulose 5-phosphate: step 4/6.</text>
</comment>
<comment type="subunit">
    <text evidence="1">Homotrimer.</text>
</comment>
<comment type="similarity">
    <text evidence="1">Belongs to the IspF family.</text>
</comment>
<gene>
    <name evidence="1" type="primary">ispF</name>
    <name type="ordered locus">HS_1498</name>
</gene>
<feature type="chain" id="PRO_1000022845" description="2-C-methyl-D-erythritol 2,4-cyclodiphosphate synthase">
    <location>
        <begin position="1"/>
        <end position="162"/>
    </location>
</feature>
<feature type="binding site" evidence="1">
    <location>
        <begin position="9"/>
        <end position="11"/>
    </location>
    <ligand>
        <name>4-CDP-2-C-methyl-D-erythritol 2-phosphate</name>
        <dbReference type="ChEBI" id="CHEBI:57919"/>
    </ligand>
</feature>
<feature type="binding site" evidence="1">
    <location>
        <position position="9"/>
    </location>
    <ligand>
        <name>a divalent metal cation</name>
        <dbReference type="ChEBI" id="CHEBI:60240"/>
    </ligand>
</feature>
<feature type="binding site" evidence="1">
    <location>
        <position position="11"/>
    </location>
    <ligand>
        <name>a divalent metal cation</name>
        <dbReference type="ChEBI" id="CHEBI:60240"/>
    </ligand>
</feature>
<feature type="binding site" evidence="1">
    <location>
        <begin position="35"/>
        <end position="36"/>
    </location>
    <ligand>
        <name>4-CDP-2-C-methyl-D-erythritol 2-phosphate</name>
        <dbReference type="ChEBI" id="CHEBI:57919"/>
    </ligand>
</feature>
<feature type="binding site" evidence="1">
    <location>
        <position position="43"/>
    </location>
    <ligand>
        <name>a divalent metal cation</name>
        <dbReference type="ChEBI" id="CHEBI:60240"/>
    </ligand>
</feature>
<feature type="binding site" evidence="1">
    <location>
        <begin position="57"/>
        <end position="59"/>
    </location>
    <ligand>
        <name>4-CDP-2-C-methyl-D-erythritol 2-phosphate</name>
        <dbReference type="ChEBI" id="CHEBI:57919"/>
    </ligand>
</feature>
<feature type="binding site" evidence="1">
    <location>
        <begin position="62"/>
        <end position="66"/>
    </location>
    <ligand>
        <name>4-CDP-2-C-methyl-D-erythritol 2-phosphate</name>
        <dbReference type="ChEBI" id="CHEBI:57919"/>
    </ligand>
</feature>
<feature type="binding site" evidence="1">
    <location>
        <begin position="133"/>
        <end position="136"/>
    </location>
    <ligand>
        <name>4-CDP-2-C-methyl-D-erythritol 2-phosphate</name>
        <dbReference type="ChEBI" id="CHEBI:57919"/>
    </ligand>
</feature>
<feature type="binding site" evidence="1">
    <location>
        <position position="140"/>
    </location>
    <ligand>
        <name>4-CDP-2-C-methyl-D-erythritol 2-phosphate</name>
        <dbReference type="ChEBI" id="CHEBI:57919"/>
    </ligand>
</feature>
<feature type="binding site" evidence="1">
    <location>
        <position position="143"/>
    </location>
    <ligand>
        <name>4-CDP-2-C-methyl-D-erythritol 2-phosphate</name>
        <dbReference type="ChEBI" id="CHEBI:57919"/>
    </ligand>
</feature>
<feature type="site" description="Transition state stabilizer" evidence="1">
    <location>
        <position position="35"/>
    </location>
</feature>
<feature type="site" description="Transition state stabilizer" evidence="1">
    <location>
        <position position="134"/>
    </location>
</feature>
<accession>Q0I5H9</accession>
<reference key="1">
    <citation type="journal article" date="2007" name="J. Bacteriol.">
        <title>Complete genome sequence of Haemophilus somnus (Histophilus somni) strain 129Pt and comparison to Haemophilus ducreyi 35000HP and Haemophilus influenzae Rd.</title>
        <authorList>
            <person name="Challacombe J.F."/>
            <person name="Duncan A.J."/>
            <person name="Brettin T.S."/>
            <person name="Bruce D."/>
            <person name="Chertkov O."/>
            <person name="Detter J.C."/>
            <person name="Han C.S."/>
            <person name="Misra M."/>
            <person name="Richardson P."/>
            <person name="Tapia R."/>
            <person name="Thayer N."/>
            <person name="Xie G."/>
            <person name="Inzana T.J."/>
        </authorList>
    </citation>
    <scope>NUCLEOTIDE SEQUENCE [LARGE SCALE GENOMIC DNA]</scope>
    <source>
        <strain>129Pt</strain>
    </source>
</reference>
<organism>
    <name type="scientific">Histophilus somni (strain 129Pt)</name>
    <name type="common">Haemophilus somnus</name>
    <dbReference type="NCBI Taxonomy" id="205914"/>
    <lineage>
        <taxon>Bacteria</taxon>
        <taxon>Pseudomonadati</taxon>
        <taxon>Pseudomonadota</taxon>
        <taxon>Gammaproteobacteria</taxon>
        <taxon>Pasteurellales</taxon>
        <taxon>Pasteurellaceae</taxon>
        <taxon>Histophilus</taxon>
    </lineage>
</organism>
<keyword id="KW-0414">Isoprene biosynthesis</keyword>
<keyword id="KW-0456">Lyase</keyword>
<keyword id="KW-0479">Metal-binding</keyword>
<name>ISPF_HISS1</name>
<evidence type="ECO:0000255" key="1">
    <source>
        <dbReference type="HAMAP-Rule" id="MF_00107"/>
    </source>
</evidence>
<dbReference type="EC" id="4.6.1.12" evidence="1"/>
<dbReference type="EMBL" id="CP000436">
    <property type="protein sequence ID" value="ABI25771.1"/>
    <property type="molecule type" value="Genomic_DNA"/>
</dbReference>
<dbReference type="SMR" id="Q0I5H9"/>
<dbReference type="KEGG" id="hso:HS_1498"/>
<dbReference type="eggNOG" id="COG0245">
    <property type="taxonomic scope" value="Bacteria"/>
</dbReference>
<dbReference type="HOGENOM" id="CLU_084630_2_0_6"/>
<dbReference type="UniPathway" id="UPA00056">
    <property type="reaction ID" value="UER00095"/>
</dbReference>
<dbReference type="GO" id="GO:0008685">
    <property type="term" value="F:2-C-methyl-D-erythritol 2,4-cyclodiphosphate synthase activity"/>
    <property type="evidence" value="ECO:0007669"/>
    <property type="project" value="UniProtKB-UniRule"/>
</dbReference>
<dbReference type="GO" id="GO:0046872">
    <property type="term" value="F:metal ion binding"/>
    <property type="evidence" value="ECO:0007669"/>
    <property type="project" value="UniProtKB-KW"/>
</dbReference>
<dbReference type="GO" id="GO:0019288">
    <property type="term" value="P:isopentenyl diphosphate biosynthetic process, methylerythritol 4-phosphate pathway"/>
    <property type="evidence" value="ECO:0007669"/>
    <property type="project" value="UniProtKB-UniRule"/>
</dbReference>
<dbReference type="GO" id="GO:0016114">
    <property type="term" value="P:terpenoid biosynthetic process"/>
    <property type="evidence" value="ECO:0007669"/>
    <property type="project" value="InterPro"/>
</dbReference>
<dbReference type="CDD" id="cd00554">
    <property type="entry name" value="MECDP_synthase"/>
    <property type="match status" value="1"/>
</dbReference>
<dbReference type="FunFam" id="3.30.1330.50:FF:000001">
    <property type="entry name" value="2-C-methyl-D-erythritol 2,4-cyclodiphosphate synthase"/>
    <property type="match status" value="1"/>
</dbReference>
<dbReference type="Gene3D" id="3.30.1330.50">
    <property type="entry name" value="2-C-methyl-D-erythritol 2,4-cyclodiphosphate synthase"/>
    <property type="match status" value="1"/>
</dbReference>
<dbReference type="HAMAP" id="MF_00107">
    <property type="entry name" value="IspF"/>
    <property type="match status" value="1"/>
</dbReference>
<dbReference type="InterPro" id="IPR003526">
    <property type="entry name" value="MECDP_synthase"/>
</dbReference>
<dbReference type="InterPro" id="IPR020555">
    <property type="entry name" value="MECDP_synthase_CS"/>
</dbReference>
<dbReference type="InterPro" id="IPR036571">
    <property type="entry name" value="MECDP_synthase_sf"/>
</dbReference>
<dbReference type="NCBIfam" id="TIGR00151">
    <property type="entry name" value="ispF"/>
    <property type="match status" value="1"/>
</dbReference>
<dbReference type="PANTHER" id="PTHR43181">
    <property type="entry name" value="2-C-METHYL-D-ERYTHRITOL 2,4-CYCLODIPHOSPHATE SYNTHASE, CHLOROPLASTIC"/>
    <property type="match status" value="1"/>
</dbReference>
<dbReference type="PANTHER" id="PTHR43181:SF1">
    <property type="entry name" value="2-C-METHYL-D-ERYTHRITOL 2,4-CYCLODIPHOSPHATE SYNTHASE, CHLOROPLASTIC"/>
    <property type="match status" value="1"/>
</dbReference>
<dbReference type="Pfam" id="PF02542">
    <property type="entry name" value="YgbB"/>
    <property type="match status" value="1"/>
</dbReference>
<dbReference type="SUPFAM" id="SSF69765">
    <property type="entry name" value="IpsF-like"/>
    <property type="match status" value="1"/>
</dbReference>
<dbReference type="PROSITE" id="PS01350">
    <property type="entry name" value="ISPF"/>
    <property type="match status" value="1"/>
</dbReference>
<protein>
    <recommendedName>
        <fullName evidence="1">2-C-methyl-D-erythritol 2,4-cyclodiphosphate synthase</fullName>
        <shortName evidence="1">MECDP-synthase</shortName>
        <shortName evidence="1">MECPP-synthase</shortName>
        <shortName evidence="1">MECPS</shortName>
        <ecNumber evidence="1">4.6.1.12</ecNumber>
    </recommendedName>
</protein>
<proteinExistence type="inferred from homology"/>
<sequence>MIRIGHGFDVHAFGGEGPIIIGGVAIPYEKGLVAHSDGDVALHALTDALLGAMALGDIGKLFPDTDIQYKGADSRRLLRTAYQAILDKGYQVGNVDITIIAQAPKMRPYIDAMRTVIAQDLHCDIEQVNVKATTTEKLGFTGRSEGIACEAVALLIKQTGTK</sequence>